<reference key="1">
    <citation type="journal article" date="1988" name="Virology">
        <title>Molecular cloning, complete nucleotide sequence, and gene structure of the provirus genome of a retrovirus produced in a human lymphoblastoid cell line.</title>
        <authorList>
            <person name="Oda T."/>
            <person name="Ikeda S."/>
            <person name="Watanabe S."/>
            <person name="Hatsushika M."/>
            <person name="Akiyama K."/>
            <person name="Mitsunobu F."/>
        </authorList>
    </citation>
    <scope>NUCLEOTIDE SEQUENCE [GENOMIC RNA]</scope>
</reference>
<comment type="function">
    <text evidence="1">The surface protein (SU) attaches the virus to the host cell by binding to its receptor. This interaction triggers the refolding of the transmembrane protein (TM) and is thought to activate its fusogenic potential by unmasking its fusion peptide. Fusion occurs at the host cell plasma membrane (By similarity).</text>
</comment>
<comment type="function">
    <text evidence="1">The transmembrane protein (TM) acts as a class I viral fusion protein. Under the current model, the protein has at least 3 conformational states: pre-fusion native state, pre-hairpin intermediate state, and post-fusion hairpin state. During viral and target cell membrane fusion, the coiled coil regions (heptad repeats) assume a trimer-of-hairpins structure, positioning the fusion peptide in close proximity to the C-terminal region of the ectodomain. The formation of this structure appears to drive apposition and subsequent fusion of viral and target cell membranes. Membranes fusion leads to delivery of the nucleocapsid into the cytoplasm (By similarity).</text>
</comment>
<comment type="subunit">
    <text evidence="1">The mature envelope protein (Env) consists of a trimer of SU-TM heterodimers attached by a labile interchain disulfide bond.</text>
</comment>
<comment type="subcellular location">
    <molecule>Transmembrane protein</molecule>
    <subcellularLocation>
        <location evidence="1">Virion membrane</location>
        <topology evidence="1">Single-pass type I membrane protein</topology>
    </subcellularLocation>
    <subcellularLocation>
        <location evidence="1">Host cell membrane</location>
        <topology evidence="1">Single-pass type I membrane protein</topology>
    </subcellularLocation>
</comment>
<comment type="subcellular location">
    <molecule>Surface protein</molecule>
    <subcellularLocation>
        <location>Virion membrane</location>
        <topology>Peripheral membrane protein</topology>
    </subcellularLocation>
    <subcellularLocation>
        <location evidence="1">Host cell membrane</location>
        <topology evidence="1">Peripheral membrane protein</topology>
    </subcellularLocation>
    <text evidence="1">The surface protein is not anchored to the viral envelope, but associates with the extravirion surface through its binding to TM. Both proteins are thought to be concentrated at the site of budding and incorporated into the virions possibly by contacts between the cytoplasmic tail of Env and the N-terminus of Gag (By similarity).</text>
</comment>
<comment type="domain">
    <text evidence="1">The YXXL motif is involved in determining the exact site of viral release at the surface of infected mononuclear cells and promotes endocytosis.</text>
</comment>
<comment type="domain">
    <text evidence="1">The 17 amino acids long immunosuppressive region is present in many retroviral envelope proteins. Synthetic peptides derived from this relatively conserved sequence inhibit immune function in vitro and in vivo (By similarity).</text>
</comment>
<comment type="PTM">
    <text evidence="1">Specific enzymatic cleavages in vivo yield mature proteins. Envelope glycoproteins are synthesized as an inactive precursor that is N-glycosylated and processed likely by host cell furin or by a furin-like protease in the Golgi to yield the mature SU and TM proteins. The cleavage site between SU and TM requires the minimal sequence [KR]-X-[KR]-R (By similarity).</text>
</comment>
<comment type="PTM">
    <text evidence="1">The CXXC motif is highly conserved across a broad range of retroviral envelope proteins. It is thought to participate in the formation of a labile disulfide bond possibly with the CX6CC motif present in the transmembrane protein. Isomerization of the intersubunit disulfide bond to an SU intrachain disulfide bond is thought to occur upon receptor recognition in order to allow membrane fusion (By similarity).</text>
</comment>
<keyword id="KW-0165">Cleavage on pair of basic residues</keyword>
<keyword id="KW-0175">Coiled coil</keyword>
<keyword id="KW-1015">Disulfide bond</keyword>
<keyword id="KW-1169">Fusion of virus membrane with host cell membrane</keyword>
<keyword id="KW-1168">Fusion of virus membrane with host membrane</keyword>
<keyword id="KW-0325">Glycoprotein</keyword>
<keyword id="KW-1032">Host cell membrane</keyword>
<keyword id="KW-1043">Host membrane</keyword>
<keyword id="KW-0945">Host-virus interaction</keyword>
<keyword id="KW-0472">Membrane</keyword>
<keyword id="KW-0732">Signal</keyword>
<keyword id="KW-0812">Transmembrane</keyword>
<keyword id="KW-1133">Transmembrane helix</keyword>
<keyword id="KW-1161">Viral attachment to host cell</keyword>
<keyword id="KW-0261">Viral envelope protein</keyword>
<keyword id="KW-1162">Viral penetration into host cytoplasm</keyword>
<keyword id="KW-0946">Virion</keyword>
<keyword id="KW-1160">Virus entry into host cell</keyword>
<organism>
    <name type="scientific">Squirrel monkey retrovirus</name>
    <name type="common">SMRV-H</name>
    <name type="synonym">SMRV-HLB</name>
    <dbReference type="NCBI Taxonomy" id="11856"/>
    <lineage>
        <taxon>Viruses</taxon>
        <taxon>Riboviria</taxon>
        <taxon>Pararnavirae</taxon>
        <taxon>Artverviricota</taxon>
        <taxon>Revtraviricetes</taxon>
        <taxon>Ortervirales</taxon>
        <taxon>Retroviridae</taxon>
        <taxon>Orthoretrovirinae</taxon>
        <taxon>Betaretrovirus</taxon>
    </lineage>
</organism>
<name>ENV_SMRVH</name>
<accession>P21412</accession>
<organismHost>
    <name type="scientific">Mammalia</name>
    <dbReference type="NCBI Taxonomy" id="40674"/>
</organismHost>
<feature type="signal peptide" evidence="2">
    <location>
        <begin position="1"/>
        <end position="19"/>
    </location>
</feature>
<feature type="chain" id="PRO_0000040801" description="Surface protein">
    <location>
        <begin position="20"/>
        <end position="386"/>
    </location>
</feature>
<feature type="chain" id="PRO_0000040802" description="Transmembrane protein">
    <location>
        <begin position="387"/>
        <end position="575"/>
    </location>
</feature>
<feature type="topological domain" description="Extracellular" evidence="2">
    <location>
        <begin position="20"/>
        <end position="517"/>
    </location>
</feature>
<feature type="transmembrane region" description="Helical" evidence="2">
    <location>
        <begin position="518"/>
        <end position="538"/>
    </location>
</feature>
<feature type="topological domain" description="Cytoplasmic" evidence="2">
    <location>
        <begin position="539"/>
        <end position="575"/>
    </location>
</feature>
<feature type="region of interest" description="Fusion peptide">
    <location>
        <begin position="390"/>
        <end position="410"/>
    </location>
</feature>
<feature type="region of interest" description="Immunosuppression" evidence="1">
    <location>
        <begin position="450"/>
        <end position="466"/>
    </location>
</feature>
<feature type="coiled-coil region" evidence="2">
    <location>
        <begin position="411"/>
        <end position="461"/>
    </location>
</feature>
<feature type="coiled-coil region" evidence="2">
    <location>
        <begin position="471"/>
        <end position="507"/>
    </location>
</feature>
<feature type="short sequence motif" description="CXXC">
    <location>
        <begin position="249"/>
        <end position="252"/>
    </location>
</feature>
<feature type="short sequence motif" description="CX6CC">
    <location>
        <begin position="467"/>
        <end position="475"/>
    </location>
</feature>
<feature type="short sequence motif" description="YXXL motif; contains endocytosis signal" evidence="1">
    <location>
        <begin position="562"/>
        <end position="565"/>
    </location>
</feature>
<feature type="site" description="Cleavage; by host" evidence="1">
    <location>
        <begin position="386"/>
        <end position="387"/>
    </location>
</feature>
<feature type="site" description="Cleavage; by viral protease" evidence="1">
    <location>
        <begin position="560"/>
        <end position="561"/>
    </location>
</feature>
<feature type="glycosylation site" description="N-linked (GlcNAc...) asparagine; by host" evidence="2">
    <location>
        <position position="126"/>
    </location>
</feature>
<feature type="glycosylation site" description="N-linked (GlcNAc...) asparagine; by host" evidence="2">
    <location>
        <position position="239"/>
    </location>
</feature>
<feature type="glycosylation site" description="N-linked (GlcNAc...) asparagine; by host" evidence="2">
    <location>
        <position position="266"/>
    </location>
</feature>
<feature type="glycosylation site" description="N-linked (GlcNAc...) asparagine; by host" evidence="2">
    <location>
        <position position="271"/>
    </location>
</feature>
<feature type="glycosylation site" description="N-linked (GlcNAc...) asparagine; by host" evidence="2">
    <location>
        <position position="302"/>
    </location>
</feature>
<feature type="glycosylation site" description="N-linked (GlcNAc...) asparagine; by host" evidence="2">
    <location>
        <position position="316"/>
    </location>
</feature>
<feature type="glycosylation site" description="N-linked (GlcNAc...) asparagine; by host" evidence="2">
    <location>
        <position position="322"/>
    </location>
</feature>
<feature type="glycosylation site" description="N-linked (GlcNAc...) asparagine; by host" evidence="2">
    <location>
        <position position="349"/>
    </location>
</feature>
<feature type="glycosylation site" description="N-linked (GlcNAc...) asparagine; by host" evidence="2">
    <location>
        <position position="479"/>
    </location>
</feature>
<feature type="disulfide bond" description="Interchain (between SU and TM chains, or C-252 with C-475); in linked form" evidence="1">
    <location>
        <begin position="249"/>
        <end position="475"/>
    </location>
</feature>
<feature type="disulfide bond" evidence="1">
    <location>
        <begin position="249"/>
        <end position="252"/>
    </location>
</feature>
<feature type="disulfide bond" evidence="1">
    <location>
        <begin position="467"/>
        <end position="474"/>
    </location>
</feature>
<proteinExistence type="inferred from homology"/>
<evidence type="ECO:0000250" key="1"/>
<evidence type="ECO:0000255" key="2"/>
<dbReference type="EMBL" id="M23385">
    <property type="protein sequence ID" value="AAA66454.1"/>
    <property type="molecule type" value="Genomic_RNA"/>
</dbReference>
<dbReference type="PIR" id="D31827">
    <property type="entry name" value="VCLJHD"/>
</dbReference>
<dbReference type="RefSeq" id="NP_041262.1">
    <property type="nucleotide sequence ID" value="NC_001514.1"/>
</dbReference>
<dbReference type="SMR" id="P21412"/>
<dbReference type="GlyCosmos" id="P21412">
    <property type="glycosylation" value="9 sites, No reported glycans"/>
</dbReference>
<dbReference type="GeneID" id="1491965"/>
<dbReference type="KEGG" id="vg:1491965"/>
<dbReference type="OrthoDB" id="2921at10239"/>
<dbReference type="Proteomes" id="UP000007223">
    <property type="component" value="Segment"/>
</dbReference>
<dbReference type="GO" id="GO:0020002">
    <property type="term" value="C:host cell plasma membrane"/>
    <property type="evidence" value="ECO:0007669"/>
    <property type="project" value="UniProtKB-SubCell"/>
</dbReference>
<dbReference type="GO" id="GO:0016020">
    <property type="term" value="C:membrane"/>
    <property type="evidence" value="ECO:0007669"/>
    <property type="project" value="UniProtKB-KW"/>
</dbReference>
<dbReference type="GO" id="GO:0019031">
    <property type="term" value="C:viral envelope"/>
    <property type="evidence" value="ECO:0007669"/>
    <property type="project" value="UniProtKB-KW"/>
</dbReference>
<dbReference type="GO" id="GO:0055036">
    <property type="term" value="C:virion membrane"/>
    <property type="evidence" value="ECO:0007669"/>
    <property type="project" value="UniProtKB-SubCell"/>
</dbReference>
<dbReference type="GO" id="GO:0019064">
    <property type="term" value="P:fusion of virus membrane with host plasma membrane"/>
    <property type="evidence" value="ECO:0007669"/>
    <property type="project" value="UniProtKB-KW"/>
</dbReference>
<dbReference type="GO" id="GO:0046718">
    <property type="term" value="P:symbiont entry into host cell"/>
    <property type="evidence" value="ECO:0007669"/>
    <property type="project" value="UniProtKB-KW"/>
</dbReference>
<dbReference type="GO" id="GO:0019062">
    <property type="term" value="P:virion attachment to host cell"/>
    <property type="evidence" value="ECO:0007669"/>
    <property type="project" value="UniProtKB-KW"/>
</dbReference>
<dbReference type="CDD" id="cd09851">
    <property type="entry name" value="HTLV-1-like_HR1-HR2"/>
    <property type="match status" value="1"/>
</dbReference>
<dbReference type="Gene3D" id="1.10.287.210">
    <property type="match status" value="1"/>
</dbReference>
<dbReference type="InterPro" id="IPR018154">
    <property type="entry name" value="TLV/ENV_coat_polyprotein"/>
</dbReference>
<dbReference type="PANTHER" id="PTHR10424:SF75">
    <property type="entry name" value="ENDOGENOUS RETROVIRUS GROUP S71 MEMBER 1 ENV POLYPROTEIN"/>
    <property type="match status" value="1"/>
</dbReference>
<dbReference type="PANTHER" id="PTHR10424">
    <property type="entry name" value="VIRAL ENVELOPE PROTEIN"/>
    <property type="match status" value="1"/>
</dbReference>
<dbReference type="Pfam" id="PF00429">
    <property type="entry name" value="TLV_coat"/>
    <property type="match status" value="1"/>
</dbReference>
<dbReference type="SUPFAM" id="SSF58069">
    <property type="entry name" value="Virus ectodomain"/>
    <property type="match status" value="1"/>
</dbReference>
<protein>
    <recommendedName>
        <fullName>Envelope glycoprotein</fullName>
    </recommendedName>
    <alternativeName>
        <fullName>Env polyprotein</fullName>
    </alternativeName>
    <component>
        <recommendedName>
            <fullName>Surface protein</fullName>
            <shortName>SU</shortName>
        </recommendedName>
        <alternativeName>
            <fullName>Glycoprotein 70</fullName>
            <shortName>gp70</shortName>
        </alternativeName>
    </component>
    <component>
        <recommendedName>
            <fullName>Transmembrane protein</fullName>
            <shortName>TM</shortName>
        </recommendedName>
        <alternativeName>
            <fullName>Glycoprotein 20</fullName>
            <shortName>gp20</shortName>
        </alternativeName>
    </component>
</protein>
<sequence length="575" mass="62245">MLCILILLLHPRLCPVTKGGLGKPSGDIYTALFGAPCDCKGGTQTNNYATPTYTQVTDCGDKNAYLTYDTNWNGVSSPKWLCVRKPPSIPVINGRPGPCPSECTNNIKSQMHSSCYSSFSQCTQGNNTYFTAILQRTKSTSETNPVTSGLQPHGVLQAGCDGTVGKSVCWNQQAPIHVSDGGGPQDAVRELYVQKQIELVIQSQFPKLSYHPLARSKPRGPDIDAQMLDILSATHQALNISNPSLAQNCWLCLNQGTSMPLAFPVNISSFNASQNNCTPSLPFRVQPMPSQVYPCFFKGAQNNSFDIPVGVANFVNCSSSSNHSEALCPGPGQAFVCGNNLAFTALPANWTGSCVLAALLPDIDIISGDDPVPIPTFDYIAGRQKRAVTLIPLLVGLGVSTAVATGTAGLGVAVQSYTKLSHQLINDVQALSSTINDLQDQLDSLAEVVLQNRRGLDLLTAEQGGICLALQERCCFYANKSGIVRDKIKNLQEDLEKRRKALADNLFLTGLNGLLPYLLPFLGPLFAIILFFSFAPWILRRVTALIRDQLNSLLGKPIQIHYHQLATRDLEYGRL</sequence>
<gene>
    <name type="primary">env</name>
</gene>